<feature type="chain" id="PRO_0000088966" description="Actin-1">
    <location>
        <begin position="1"/>
        <end position="374"/>
    </location>
</feature>
<protein>
    <recommendedName>
        <fullName>Actin-1</fullName>
        <ecNumber evidence="1">3.6.4.-</ecNumber>
    </recommendedName>
</protein>
<organism>
    <name type="scientific">Naegleria pringsheimi</name>
    <name type="common">Amoeba</name>
    <dbReference type="NCBI Taxonomy" id="234921"/>
    <lineage>
        <taxon>Eukaryota</taxon>
        <taxon>Discoba</taxon>
        <taxon>Heterolobosea</taxon>
        <taxon>Tetramitia</taxon>
        <taxon>Eutetramitia</taxon>
        <taxon>Vahlkampfiidae</taxon>
        <taxon>Naegleria</taxon>
    </lineage>
</organism>
<accession>Q9NJV4</accession>
<gene>
    <name type="primary">ACT1</name>
</gene>
<evidence type="ECO:0000250" key="1">
    <source>
        <dbReference type="UniProtKB" id="Q8I4X0"/>
    </source>
</evidence>
<evidence type="ECO:0000305" key="2"/>
<name>ACT1_NAEPR</name>
<keyword id="KW-0067">ATP-binding</keyword>
<keyword id="KW-0963">Cytoplasm</keyword>
<keyword id="KW-0206">Cytoskeleton</keyword>
<keyword id="KW-0378">Hydrolase</keyword>
<keyword id="KW-0547">Nucleotide-binding</keyword>
<dbReference type="EC" id="3.6.4.-" evidence="1"/>
<dbReference type="EMBL" id="AF101729">
    <property type="protein sequence ID" value="AAF37002.1"/>
    <property type="molecule type" value="Genomic_DNA"/>
</dbReference>
<dbReference type="SMR" id="Q9NJV4"/>
<dbReference type="GO" id="GO:0005737">
    <property type="term" value="C:cytoplasm"/>
    <property type="evidence" value="ECO:0007669"/>
    <property type="project" value="UniProtKB-KW"/>
</dbReference>
<dbReference type="GO" id="GO:0005856">
    <property type="term" value="C:cytoskeleton"/>
    <property type="evidence" value="ECO:0007669"/>
    <property type="project" value="UniProtKB-SubCell"/>
</dbReference>
<dbReference type="GO" id="GO:0005524">
    <property type="term" value="F:ATP binding"/>
    <property type="evidence" value="ECO:0007669"/>
    <property type="project" value="UniProtKB-KW"/>
</dbReference>
<dbReference type="GO" id="GO:0016787">
    <property type="term" value="F:hydrolase activity"/>
    <property type="evidence" value="ECO:0007669"/>
    <property type="project" value="UniProtKB-KW"/>
</dbReference>
<dbReference type="CDD" id="cd10224">
    <property type="entry name" value="ASKHA_NBD_actin"/>
    <property type="match status" value="1"/>
</dbReference>
<dbReference type="FunFam" id="3.30.420.40:FF:000291">
    <property type="entry name" value="Actin, alpha skeletal muscle"/>
    <property type="match status" value="1"/>
</dbReference>
<dbReference type="FunFam" id="3.90.640.10:FF:000001">
    <property type="entry name" value="Actin, muscle"/>
    <property type="match status" value="1"/>
</dbReference>
<dbReference type="FunFam" id="3.30.420.40:FF:000404">
    <property type="entry name" value="Major actin"/>
    <property type="match status" value="1"/>
</dbReference>
<dbReference type="Gene3D" id="3.30.420.40">
    <property type="match status" value="2"/>
</dbReference>
<dbReference type="Gene3D" id="3.90.640.10">
    <property type="entry name" value="Actin, Chain A, domain 4"/>
    <property type="match status" value="1"/>
</dbReference>
<dbReference type="InterPro" id="IPR004000">
    <property type="entry name" value="Actin"/>
</dbReference>
<dbReference type="InterPro" id="IPR020902">
    <property type="entry name" value="Actin/actin-like_CS"/>
</dbReference>
<dbReference type="InterPro" id="IPR043129">
    <property type="entry name" value="ATPase_NBD"/>
</dbReference>
<dbReference type="PANTHER" id="PTHR11937">
    <property type="entry name" value="ACTIN"/>
    <property type="match status" value="1"/>
</dbReference>
<dbReference type="Pfam" id="PF00022">
    <property type="entry name" value="Actin"/>
    <property type="match status" value="1"/>
</dbReference>
<dbReference type="PRINTS" id="PR00190">
    <property type="entry name" value="ACTIN"/>
</dbReference>
<dbReference type="SMART" id="SM00268">
    <property type="entry name" value="ACTIN"/>
    <property type="match status" value="1"/>
</dbReference>
<dbReference type="SUPFAM" id="SSF53067">
    <property type="entry name" value="Actin-like ATPase domain"/>
    <property type="match status" value="2"/>
</dbReference>
<dbReference type="PROSITE" id="PS01132">
    <property type="entry name" value="ACTINS_ACT_LIKE"/>
    <property type="match status" value="1"/>
</dbReference>
<reference key="1">
    <citation type="submission" date="1998-09" db="EMBL/GenBank/DDBJ databases">
        <title>The regulation of actin gene expression during Naegleria differentiation.</title>
        <authorList>
            <person name="Lee J.H."/>
        </authorList>
    </citation>
    <scope>NUCLEOTIDE SEQUENCE [GENOMIC DNA]</scope>
    <source>
        <strain>ATCC 30961 / NB-1</strain>
    </source>
</reference>
<sequence>MEEHQALVIDNGSGMCKAGFAGEDAPRAVFPSLIGRPLQRSIMVGMGNKDAYVGDEAMSKKGILALKYPIEHGIITNWDDMEKIWHHTFYNELRVGPEEHGVLLTEAPLNPKANREKMTQIMFETFRVPAMYVAIQAVLSLYASGRTTGIVLDSGDGVSHTVPIYEGYALPHAILRLDLAGRDLTDYLMKILMERGYSFNTSAEREIVRDIKEKLCYIAFDFEGEMKKASESTAVDTSYELPDGNIITIGNERFRCPEVLFQPNFIGMEAAGVHETAFNSIGKCDIDIRKDLYSNVVLSGGTTMFEGIAERMTKELTAMAPASMKIRVVAPPERKYSVWIGGSILSSLSTFQSMWITAEEYEDAGCGIVHRKCF</sequence>
<proteinExistence type="inferred from homology"/>
<comment type="function">
    <text>Actins are highly conserved proteins that are involved in various types of cell motility and are ubiquitously expressed in all eukaryotic cells.</text>
</comment>
<comment type="catalytic activity">
    <reaction evidence="1">
        <text>ATP + H2O = ADP + phosphate + H(+)</text>
        <dbReference type="Rhea" id="RHEA:13065"/>
        <dbReference type="ChEBI" id="CHEBI:15377"/>
        <dbReference type="ChEBI" id="CHEBI:15378"/>
        <dbReference type="ChEBI" id="CHEBI:30616"/>
        <dbReference type="ChEBI" id="CHEBI:43474"/>
        <dbReference type="ChEBI" id="CHEBI:456216"/>
    </reaction>
</comment>
<comment type="subcellular location">
    <subcellularLocation>
        <location>Cytoplasm</location>
        <location>Cytoskeleton</location>
    </subcellularLocation>
</comment>
<comment type="similarity">
    <text evidence="2">Belongs to the actin family.</text>
</comment>